<gene>
    <name type="primary">hemA</name>
</gene>
<feature type="chain" id="PRO_0000163824" description="5-aminolevulinate synthase">
    <location>
        <begin position="1"/>
        <end position="405"/>
    </location>
</feature>
<feature type="active site" evidence="1">
    <location>
        <position position="248"/>
    </location>
</feature>
<feature type="binding site" evidence="1">
    <location>
        <position position="21"/>
    </location>
    <ligand>
        <name>substrate</name>
    </ligand>
</feature>
<feature type="binding site" evidence="1">
    <location>
        <position position="137"/>
    </location>
    <ligand>
        <name>substrate</name>
    </ligand>
</feature>
<feature type="binding site" description="in other chain" evidence="1">
    <location>
        <position position="189"/>
    </location>
    <ligand>
        <name>pyridoxal 5'-phosphate</name>
        <dbReference type="ChEBI" id="CHEBI:597326"/>
        <note>ligand shared between dimeric partners</note>
    </ligand>
</feature>
<feature type="binding site" description="in other chain" evidence="1">
    <location>
        <position position="217"/>
    </location>
    <ligand>
        <name>pyridoxal 5'-phosphate</name>
        <dbReference type="ChEBI" id="CHEBI:597326"/>
        <note>ligand shared between dimeric partners</note>
    </ligand>
</feature>
<feature type="binding site" description="in other chain" evidence="1">
    <location>
        <position position="245"/>
    </location>
    <ligand>
        <name>pyridoxal 5'-phosphate</name>
        <dbReference type="ChEBI" id="CHEBI:597326"/>
        <note>ligand shared between dimeric partners</note>
    </ligand>
</feature>
<feature type="binding site" evidence="1">
    <location>
        <position position="277"/>
    </location>
    <ligand>
        <name>pyridoxal 5'-phosphate</name>
        <dbReference type="ChEBI" id="CHEBI:597326"/>
        <note>ligand shared between dimeric partners</note>
    </ligand>
</feature>
<feature type="binding site" evidence="1">
    <location>
        <position position="278"/>
    </location>
    <ligand>
        <name>pyridoxal 5'-phosphate</name>
        <dbReference type="ChEBI" id="CHEBI:597326"/>
        <note>ligand shared between dimeric partners</note>
    </ligand>
</feature>
<feature type="binding site" evidence="1">
    <location>
        <position position="363"/>
    </location>
    <ligand>
        <name>substrate</name>
    </ligand>
</feature>
<feature type="modified residue" description="N6-(pyridoxal phosphate)lysine" evidence="1">
    <location>
        <position position="248"/>
    </location>
</feature>
<sequence length="405" mass="44412">MDFEAFFTTELQSLHSEGRYRVFADIERQQGNFPRATRYNANGQRKDVTVWCSNDYLGMGQNPKVIEAMKAAIDHCGAGAGGTRNISGTNHYHVLLEQELADLHGKESALIFTSGYVSNWATLGTLGQKIPGLIIFSDALNHASMIEGIRYGRCERVIWKHNDLEDLEAKLKAADPNAPKLIAFESVYSMDGDIAPIKEICDLADRYGAMTYLDEVHAVGMYGPRGGGIAEREGLMDRLTIIEGTLGKAFGVMGGYITGSTAVCDFIRSFASGFIFTTALPPSLAAGAIASIQHLKASPFERARHQDRVRKLRGLLDARGIPHMDNPSHIVPVMVGDAAKCKWISDILLDSHGVYVQPINYPTVPRKTERLRITPTPLHSDADIEHLVGALHQLWSHCALARAVA</sequence>
<keyword id="KW-0012">Acyltransferase</keyword>
<keyword id="KW-0350">Heme biosynthesis</keyword>
<keyword id="KW-0663">Pyridoxal phosphate</keyword>
<keyword id="KW-0808">Transferase</keyword>
<proteinExistence type="inferred from homology"/>
<protein>
    <recommendedName>
        <fullName>5-aminolevulinate synthase</fullName>
        <ecNumber>2.3.1.37</ecNumber>
    </recommendedName>
    <alternativeName>
        <fullName>5-aminolevulinic acid synthase</fullName>
    </alternativeName>
    <alternativeName>
        <fullName>Delta-ALA synthase</fullName>
    </alternativeName>
    <alternativeName>
        <fullName>Delta-aminolevulinate synthase</fullName>
    </alternativeName>
</protein>
<accession>P26505</accession>
<name>HEM1_RHIRD</name>
<comment type="catalytic activity">
    <reaction>
        <text>succinyl-CoA + glycine + H(+) = 5-aminolevulinate + CO2 + CoA</text>
        <dbReference type="Rhea" id="RHEA:12921"/>
        <dbReference type="ChEBI" id="CHEBI:15378"/>
        <dbReference type="ChEBI" id="CHEBI:16526"/>
        <dbReference type="ChEBI" id="CHEBI:57287"/>
        <dbReference type="ChEBI" id="CHEBI:57292"/>
        <dbReference type="ChEBI" id="CHEBI:57305"/>
        <dbReference type="ChEBI" id="CHEBI:356416"/>
        <dbReference type="EC" id="2.3.1.37"/>
    </reaction>
</comment>
<comment type="cofactor">
    <cofactor evidence="1">
        <name>pyridoxal 5'-phosphate</name>
        <dbReference type="ChEBI" id="CHEBI:597326"/>
    </cofactor>
</comment>
<comment type="pathway">
    <text>Porphyrin-containing compound metabolism; protoporphyrin-IX biosynthesis; 5-aminolevulinate from glycine: step 1/1.</text>
</comment>
<comment type="subunit">
    <text evidence="1">Homodimer.</text>
</comment>
<comment type="similarity">
    <text evidence="2">Belongs to the class-II pyridoxal-phosphate-dependent aminotransferase family.</text>
</comment>
<dbReference type="EC" id="2.3.1.37"/>
<dbReference type="PIR" id="S15996">
    <property type="entry name" value="S15996"/>
</dbReference>
<dbReference type="SMR" id="P26505"/>
<dbReference type="eggNOG" id="COG0156">
    <property type="taxonomic scope" value="Bacteria"/>
</dbReference>
<dbReference type="UniPathway" id="UPA00251">
    <property type="reaction ID" value="UER00375"/>
</dbReference>
<dbReference type="GO" id="GO:0003870">
    <property type="term" value="F:5-aminolevulinate synthase activity"/>
    <property type="evidence" value="ECO:0007669"/>
    <property type="project" value="UniProtKB-EC"/>
</dbReference>
<dbReference type="GO" id="GO:0030170">
    <property type="term" value="F:pyridoxal phosphate binding"/>
    <property type="evidence" value="ECO:0007669"/>
    <property type="project" value="InterPro"/>
</dbReference>
<dbReference type="GO" id="GO:0006782">
    <property type="term" value="P:protoporphyrinogen IX biosynthetic process"/>
    <property type="evidence" value="ECO:0007669"/>
    <property type="project" value="UniProtKB-UniPathway"/>
</dbReference>
<dbReference type="CDD" id="cd06454">
    <property type="entry name" value="KBL_like"/>
    <property type="match status" value="1"/>
</dbReference>
<dbReference type="FunFam" id="3.40.640.10:FF:000006">
    <property type="entry name" value="5-aminolevulinate synthase, mitochondrial"/>
    <property type="match status" value="1"/>
</dbReference>
<dbReference type="Gene3D" id="3.90.1150.10">
    <property type="entry name" value="Aspartate Aminotransferase, domain 1"/>
    <property type="match status" value="1"/>
</dbReference>
<dbReference type="Gene3D" id="3.40.640.10">
    <property type="entry name" value="Type I PLP-dependent aspartate aminotransferase-like (Major domain)"/>
    <property type="match status" value="1"/>
</dbReference>
<dbReference type="InterPro" id="IPR010961">
    <property type="entry name" value="4pyrrol_synth_NH2levulA_synth"/>
</dbReference>
<dbReference type="InterPro" id="IPR001917">
    <property type="entry name" value="Aminotrans_II_pyridoxalP_BS"/>
</dbReference>
<dbReference type="InterPro" id="IPR004839">
    <property type="entry name" value="Aminotransferase_I/II_large"/>
</dbReference>
<dbReference type="InterPro" id="IPR050087">
    <property type="entry name" value="AON_synthase_class-II"/>
</dbReference>
<dbReference type="InterPro" id="IPR015424">
    <property type="entry name" value="PyrdxlP-dep_Trfase"/>
</dbReference>
<dbReference type="InterPro" id="IPR015421">
    <property type="entry name" value="PyrdxlP-dep_Trfase_major"/>
</dbReference>
<dbReference type="InterPro" id="IPR015422">
    <property type="entry name" value="PyrdxlP-dep_Trfase_small"/>
</dbReference>
<dbReference type="NCBIfam" id="TIGR01821">
    <property type="entry name" value="5aminolev_synth"/>
    <property type="match status" value="1"/>
</dbReference>
<dbReference type="PANTHER" id="PTHR13693:SF102">
    <property type="entry name" value="2-AMINO-3-KETOBUTYRATE COENZYME A LIGASE, MITOCHONDRIAL"/>
    <property type="match status" value="1"/>
</dbReference>
<dbReference type="PANTHER" id="PTHR13693">
    <property type="entry name" value="CLASS II AMINOTRANSFERASE/8-AMINO-7-OXONONANOATE SYNTHASE"/>
    <property type="match status" value="1"/>
</dbReference>
<dbReference type="Pfam" id="PF00155">
    <property type="entry name" value="Aminotran_1_2"/>
    <property type="match status" value="1"/>
</dbReference>
<dbReference type="SUPFAM" id="SSF53383">
    <property type="entry name" value="PLP-dependent transferases"/>
    <property type="match status" value="1"/>
</dbReference>
<dbReference type="PROSITE" id="PS00599">
    <property type="entry name" value="AA_TRANSFER_CLASS_2"/>
    <property type="match status" value="1"/>
</dbReference>
<evidence type="ECO:0000250" key="1">
    <source>
        <dbReference type="UniProtKB" id="P18079"/>
    </source>
</evidence>
<evidence type="ECO:0000305" key="2"/>
<reference key="1">
    <citation type="journal article" date="1991" name="Mol. Gen. Genet.">
        <title>Cloning and nucleotide sequence of the hemA gene of Agrobacterium radiobacter.</title>
        <authorList>
            <person name="Drolet M."/>
            <person name="Sasarman A."/>
        </authorList>
    </citation>
    <scope>NUCLEOTIDE SEQUENCE [GENOMIC DNA]</scope>
    <source>
        <strain>ATCC 4718 / JCM 20199 / IAM 1526 / LMG 139 / NBRC 12664 / CIP 104326 / R-3</strain>
    </source>
</reference>
<organism>
    <name type="scientific">Rhizobium radiobacter</name>
    <name type="common">Agrobacterium tumefaciens</name>
    <name type="synonym">Agrobacterium radiobacter</name>
    <dbReference type="NCBI Taxonomy" id="358"/>
    <lineage>
        <taxon>Bacteria</taxon>
        <taxon>Pseudomonadati</taxon>
        <taxon>Pseudomonadota</taxon>
        <taxon>Alphaproteobacteria</taxon>
        <taxon>Hyphomicrobiales</taxon>
        <taxon>Rhizobiaceae</taxon>
        <taxon>Rhizobium/Agrobacterium group</taxon>
        <taxon>Agrobacterium</taxon>
        <taxon>Agrobacterium tumefaciens complex</taxon>
    </lineage>
</organism>